<proteinExistence type="inferred from homology"/>
<protein>
    <recommendedName>
        <fullName evidence="1">Glutamine--fructose-6-phosphate aminotransferase [isomerizing]</fullName>
        <ecNumber evidence="1">2.6.1.16</ecNumber>
    </recommendedName>
    <alternativeName>
        <fullName evidence="1">D-fructose-6-phosphate amidotransferase</fullName>
    </alternativeName>
    <alternativeName>
        <fullName evidence="1">GFAT</fullName>
    </alternativeName>
    <alternativeName>
        <fullName evidence="1">Glucosamine-6-phosphate synthase</fullName>
    </alternativeName>
    <alternativeName>
        <fullName evidence="1">Hexosephosphate aminotransferase</fullName>
    </alternativeName>
    <alternativeName>
        <fullName evidence="1">L-glutamine--D-fructose-6-phosphate amidotransferase</fullName>
    </alternativeName>
</protein>
<evidence type="ECO:0000255" key="1">
    <source>
        <dbReference type="HAMAP-Rule" id="MF_00164"/>
    </source>
</evidence>
<accession>Q8ETM5</accession>
<dbReference type="EC" id="2.6.1.16" evidence="1"/>
<dbReference type="EMBL" id="BA000028">
    <property type="protein sequence ID" value="BAC12191.1"/>
    <property type="molecule type" value="Genomic_DNA"/>
</dbReference>
<dbReference type="RefSeq" id="WP_011064636.1">
    <property type="nucleotide sequence ID" value="NC_004193.1"/>
</dbReference>
<dbReference type="SMR" id="Q8ETM5"/>
<dbReference type="STRING" id="221109.gene:10732438"/>
<dbReference type="KEGG" id="oih:OB0235"/>
<dbReference type="eggNOG" id="COG0449">
    <property type="taxonomic scope" value="Bacteria"/>
</dbReference>
<dbReference type="HOGENOM" id="CLU_012520_7_1_9"/>
<dbReference type="OrthoDB" id="106547at2"/>
<dbReference type="PhylomeDB" id="Q8ETM5"/>
<dbReference type="Proteomes" id="UP000000822">
    <property type="component" value="Chromosome"/>
</dbReference>
<dbReference type="GO" id="GO:0005829">
    <property type="term" value="C:cytosol"/>
    <property type="evidence" value="ECO:0007669"/>
    <property type="project" value="TreeGrafter"/>
</dbReference>
<dbReference type="GO" id="GO:0097367">
    <property type="term" value="F:carbohydrate derivative binding"/>
    <property type="evidence" value="ECO:0007669"/>
    <property type="project" value="InterPro"/>
</dbReference>
<dbReference type="GO" id="GO:0004360">
    <property type="term" value="F:glutamine-fructose-6-phosphate transaminase (isomerizing) activity"/>
    <property type="evidence" value="ECO:0007669"/>
    <property type="project" value="UniProtKB-UniRule"/>
</dbReference>
<dbReference type="GO" id="GO:0005975">
    <property type="term" value="P:carbohydrate metabolic process"/>
    <property type="evidence" value="ECO:0007669"/>
    <property type="project" value="UniProtKB-UniRule"/>
</dbReference>
<dbReference type="GO" id="GO:0006002">
    <property type="term" value="P:fructose 6-phosphate metabolic process"/>
    <property type="evidence" value="ECO:0007669"/>
    <property type="project" value="TreeGrafter"/>
</dbReference>
<dbReference type="GO" id="GO:0006487">
    <property type="term" value="P:protein N-linked glycosylation"/>
    <property type="evidence" value="ECO:0007669"/>
    <property type="project" value="TreeGrafter"/>
</dbReference>
<dbReference type="GO" id="GO:0006047">
    <property type="term" value="P:UDP-N-acetylglucosamine metabolic process"/>
    <property type="evidence" value="ECO:0007669"/>
    <property type="project" value="TreeGrafter"/>
</dbReference>
<dbReference type="CDD" id="cd00714">
    <property type="entry name" value="GFAT"/>
    <property type="match status" value="1"/>
</dbReference>
<dbReference type="CDD" id="cd05008">
    <property type="entry name" value="SIS_GlmS_GlmD_1"/>
    <property type="match status" value="1"/>
</dbReference>
<dbReference type="CDD" id="cd05009">
    <property type="entry name" value="SIS_GlmS_GlmD_2"/>
    <property type="match status" value="1"/>
</dbReference>
<dbReference type="FunFam" id="3.40.50.10490:FF:000001">
    <property type="entry name" value="Glutamine--fructose-6-phosphate aminotransferase [isomerizing]"/>
    <property type="match status" value="1"/>
</dbReference>
<dbReference type="FunFam" id="3.60.20.10:FF:000006">
    <property type="entry name" value="Glutamine--fructose-6-phosphate aminotransferase [isomerizing]"/>
    <property type="match status" value="1"/>
</dbReference>
<dbReference type="Gene3D" id="3.40.50.10490">
    <property type="entry name" value="Glucose-6-phosphate isomerase like protein, domain 1"/>
    <property type="match status" value="2"/>
</dbReference>
<dbReference type="Gene3D" id="3.60.20.10">
    <property type="entry name" value="Glutamine Phosphoribosylpyrophosphate, subunit 1, domain 1"/>
    <property type="match status" value="1"/>
</dbReference>
<dbReference type="HAMAP" id="MF_00164">
    <property type="entry name" value="GlmS"/>
    <property type="match status" value="1"/>
</dbReference>
<dbReference type="InterPro" id="IPR017932">
    <property type="entry name" value="GATase_2_dom"/>
</dbReference>
<dbReference type="InterPro" id="IPR005855">
    <property type="entry name" value="GFAT"/>
</dbReference>
<dbReference type="InterPro" id="IPR047084">
    <property type="entry name" value="GFAT_N"/>
</dbReference>
<dbReference type="InterPro" id="IPR035466">
    <property type="entry name" value="GlmS/AgaS_SIS"/>
</dbReference>
<dbReference type="InterPro" id="IPR035490">
    <property type="entry name" value="GlmS/FrlB_SIS"/>
</dbReference>
<dbReference type="InterPro" id="IPR029055">
    <property type="entry name" value="Ntn_hydrolases_N"/>
</dbReference>
<dbReference type="InterPro" id="IPR001347">
    <property type="entry name" value="SIS_dom"/>
</dbReference>
<dbReference type="InterPro" id="IPR046348">
    <property type="entry name" value="SIS_dom_sf"/>
</dbReference>
<dbReference type="NCBIfam" id="TIGR01135">
    <property type="entry name" value="glmS"/>
    <property type="match status" value="1"/>
</dbReference>
<dbReference type="NCBIfam" id="NF001484">
    <property type="entry name" value="PRK00331.1"/>
    <property type="match status" value="1"/>
</dbReference>
<dbReference type="PANTHER" id="PTHR10937">
    <property type="entry name" value="GLUCOSAMINE--FRUCTOSE-6-PHOSPHATE AMINOTRANSFERASE, ISOMERIZING"/>
    <property type="match status" value="1"/>
</dbReference>
<dbReference type="PANTHER" id="PTHR10937:SF0">
    <property type="entry name" value="GLUTAMINE--FRUCTOSE-6-PHOSPHATE TRANSAMINASE (ISOMERIZING)"/>
    <property type="match status" value="1"/>
</dbReference>
<dbReference type="Pfam" id="PF13522">
    <property type="entry name" value="GATase_6"/>
    <property type="match status" value="1"/>
</dbReference>
<dbReference type="Pfam" id="PF01380">
    <property type="entry name" value="SIS"/>
    <property type="match status" value="2"/>
</dbReference>
<dbReference type="SUPFAM" id="SSF56235">
    <property type="entry name" value="N-terminal nucleophile aminohydrolases (Ntn hydrolases)"/>
    <property type="match status" value="1"/>
</dbReference>
<dbReference type="SUPFAM" id="SSF53697">
    <property type="entry name" value="SIS domain"/>
    <property type="match status" value="1"/>
</dbReference>
<dbReference type="PROSITE" id="PS51278">
    <property type="entry name" value="GATASE_TYPE_2"/>
    <property type="match status" value="1"/>
</dbReference>
<dbReference type="PROSITE" id="PS51464">
    <property type="entry name" value="SIS"/>
    <property type="match status" value="2"/>
</dbReference>
<gene>
    <name evidence="1" type="primary">glmS</name>
    <name type="ordered locus">OB0235</name>
</gene>
<organism>
    <name type="scientific">Oceanobacillus iheyensis (strain DSM 14371 / CIP 107618 / JCM 11309 / KCTC 3954 / HTE831)</name>
    <dbReference type="NCBI Taxonomy" id="221109"/>
    <lineage>
        <taxon>Bacteria</taxon>
        <taxon>Bacillati</taxon>
        <taxon>Bacillota</taxon>
        <taxon>Bacilli</taxon>
        <taxon>Bacillales</taxon>
        <taxon>Bacillaceae</taxon>
        <taxon>Oceanobacillus</taxon>
    </lineage>
</organism>
<reference key="1">
    <citation type="journal article" date="2002" name="Nucleic Acids Res.">
        <title>Genome sequence of Oceanobacillus iheyensis isolated from the Iheya Ridge and its unexpected adaptive capabilities to extreme environments.</title>
        <authorList>
            <person name="Takami H."/>
            <person name="Takaki Y."/>
            <person name="Uchiyama I."/>
        </authorList>
    </citation>
    <scope>NUCLEOTIDE SEQUENCE [LARGE SCALE GENOMIC DNA]</scope>
    <source>
        <strain>DSM 14371 / CIP 107618 / JCM 11309 / KCTC 3954 / HTE831</strain>
    </source>
</reference>
<sequence>MCGIVGYIGQNDTKEILLTGLEKLEYRGYDSAGIATLNDNGVHVTKVKGRIATLREDVDTTIDSTMGIGHTRWATHGVPSVMNAHPHQSTSERFTIVHNGVIENYNDIKNEYLADVSFISETDTEVIVQLIEKLHEKYQDTKKAFSEAMSLLKGSYAIGLIDAEDSETLYVSKNKSPLLVGLGDGFNLVASDAMATLRETDQYLEIFDKEIVLVSRNYVEVQTLDGQVVERKPFTAEIDASDTEKGTYPHFMLKEIDEQPIVMRKIIQEYQNDNGQLKLDQDIRTAMKDADRIYIIAAGTSYHAGLVGKEFIEKLANIPVEVHVASEFSYNMPLLSEKPLFVFISQSGETADSRAVLVKIKELGHPALTLTNVPGSTLSREANYTMHLHAGPEIAVASTKAYTAQIAVLAILAVDTARVKGLELDFEPLQELAIVANAMEVLTDQKEELEQLARDYFGTTRNAFFIGRSTDYHVAQEAALKLKEISYIQAEGFAGGELKHGTIALIEEGTPVIALTTQENVNYSIRGNVQEVVARGANAMVVSMKGLEQDEDAFVIPHVHELLTPLASVIPMQLLAYYAALHRDCDVDKPRNLAKSVTVE</sequence>
<comment type="function">
    <text evidence="1">Catalyzes the first step in hexosamine metabolism, converting fructose-6P into glucosamine-6P using glutamine as a nitrogen source.</text>
</comment>
<comment type="catalytic activity">
    <reaction evidence="1">
        <text>D-fructose 6-phosphate + L-glutamine = D-glucosamine 6-phosphate + L-glutamate</text>
        <dbReference type="Rhea" id="RHEA:13237"/>
        <dbReference type="ChEBI" id="CHEBI:29985"/>
        <dbReference type="ChEBI" id="CHEBI:58359"/>
        <dbReference type="ChEBI" id="CHEBI:58725"/>
        <dbReference type="ChEBI" id="CHEBI:61527"/>
        <dbReference type="EC" id="2.6.1.16"/>
    </reaction>
</comment>
<comment type="subunit">
    <text evidence="1">Homodimer.</text>
</comment>
<comment type="subcellular location">
    <subcellularLocation>
        <location evidence="1">Cytoplasm</location>
    </subcellularLocation>
</comment>
<name>GLMS_OCEIH</name>
<feature type="initiator methionine" description="Removed" evidence="1">
    <location>
        <position position="1"/>
    </location>
</feature>
<feature type="chain" id="PRO_0000135363" description="Glutamine--fructose-6-phosphate aminotransferase [isomerizing]">
    <location>
        <begin position="2"/>
        <end position="600"/>
    </location>
</feature>
<feature type="domain" description="Glutamine amidotransferase type-2" evidence="1">
    <location>
        <begin position="2"/>
        <end position="217"/>
    </location>
</feature>
<feature type="domain" description="SIS 1" evidence="1">
    <location>
        <begin position="283"/>
        <end position="422"/>
    </location>
</feature>
<feature type="domain" description="SIS 2" evidence="1">
    <location>
        <begin position="452"/>
        <end position="590"/>
    </location>
</feature>
<feature type="active site" description="Nucleophile; for GATase activity" evidence="1">
    <location>
        <position position="2"/>
    </location>
</feature>
<feature type="active site" description="For Fru-6P isomerization activity" evidence="1">
    <location>
        <position position="595"/>
    </location>
</feature>
<keyword id="KW-0032">Aminotransferase</keyword>
<keyword id="KW-0963">Cytoplasm</keyword>
<keyword id="KW-0315">Glutamine amidotransferase</keyword>
<keyword id="KW-1185">Reference proteome</keyword>
<keyword id="KW-0677">Repeat</keyword>
<keyword id="KW-0808">Transferase</keyword>